<reference key="1">
    <citation type="journal article" date="2007" name="PLoS ONE">
        <title>A glimpse of streptococcal toxic shock syndrome from comparative genomics of S. suis 2 Chinese isolates.</title>
        <authorList>
            <person name="Chen C."/>
            <person name="Tang J."/>
            <person name="Dong W."/>
            <person name="Wang C."/>
            <person name="Feng Y."/>
            <person name="Wang J."/>
            <person name="Zheng F."/>
            <person name="Pan X."/>
            <person name="Liu D."/>
            <person name="Li M."/>
            <person name="Song Y."/>
            <person name="Zhu X."/>
            <person name="Sun H."/>
            <person name="Feng T."/>
            <person name="Guo Z."/>
            <person name="Ju A."/>
            <person name="Ge J."/>
            <person name="Dong Y."/>
            <person name="Sun W."/>
            <person name="Jiang Y."/>
            <person name="Wang J."/>
            <person name="Yan J."/>
            <person name="Yang H."/>
            <person name="Wang X."/>
            <person name="Gao G.F."/>
            <person name="Yang R."/>
            <person name="Wang J."/>
            <person name="Yu J."/>
        </authorList>
    </citation>
    <scope>NUCLEOTIDE SEQUENCE [LARGE SCALE GENOMIC DNA]</scope>
    <source>
        <strain>05ZYH33</strain>
    </source>
</reference>
<accession>A4VVK3</accession>
<feature type="chain" id="PRO_0000368812" description="ATP synthase subunit b">
    <location>
        <begin position="1"/>
        <end position="168"/>
    </location>
</feature>
<feature type="transmembrane region" description="Helical" evidence="1">
    <location>
        <begin position="10"/>
        <end position="30"/>
    </location>
</feature>
<dbReference type="EMBL" id="CP000407">
    <property type="protein sequence ID" value="ABP90142.1"/>
    <property type="molecule type" value="Genomic_DNA"/>
</dbReference>
<dbReference type="SMR" id="A4VVK3"/>
<dbReference type="STRING" id="391295.SSU05_1176"/>
<dbReference type="KEGG" id="ssu:SSU05_1176"/>
<dbReference type="eggNOG" id="COG0711">
    <property type="taxonomic scope" value="Bacteria"/>
</dbReference>
<dbReference type="HOGENOM" id="CLU_079215_4_2_9"/>
<dbReference type="GO" id="GO:0005886">
    <property type="term" value="C:plasma membrane"/>
    <property type="evidence" value="ECO:0007669"/>
    <property type="project" value="UniProtKB-SubCell"/>
</dbReference>
<dbReference type="GO" id="GO:0045259">
    <property type="term" value="C:proton-transporting ATP synthase complex"/>
    <property type="evidence" value="ECO:0007669"/>
    <property type="project" value="UniProtKB-KW"/>
</dbReference>
<dbReference type="GO" id="GO:0046933">
    <property type="term" value="F:proton-transporting ATP synthase activity, rotational mechanism"/>
    <property type="evidence" value="ECO:0007669"/>
    <property type="project" value="UniProtKB-UniRule"/>
</dbReference>
<dbReference type="GO" id="GO:0046961">
    <property type="term" value="F:proton-transporting ATPase activity, rotational mechanism"/>
    <property type="evidence" value="ECO:0007669"/>
    <property type="project" value="TreeGrafter"/>
</dbReference>
<dbReference type="CDD" id="cd06503">
    <property type="entry name" value="ATP-synt_Fo_b"/>
    <property type="match status" value="1"/>
</dbReference>
<dbReference type="HAMAP" id="MF_01398">
    <property type="entry name" value="ATP_synth_b_bprime"/>
    <property type="match status" value="1"/>
</dbReference>
<dbReference type="InterPro" id="IPR028987">
    <property type="entry name" value="ATP_synth_B-like_membr_sf"/>
</dbReference>
<dbReference type="InterPro" id="IPR002146">
    <property type="entry name" value="ATP_synth_b/b'su_bac/chlpt"/>
</dbReference>
<dbReference type="InterPro" id="IPR005864">
    <property type="entry name" value="ATP_synth_F0_bsu_bac"/>
</dbReference>
<dbReference type="InterPro" id="IPR050059">
    <property type="entry name" value="ATP_synthase_B_chain"/>
</dbReference>
<dbReference type="NCBIfam" id="TIGR01144">
    <property type="entry name" value="ATP_synt_b"/>
    <property type="match status" value="1"/>
</dbReference>
<dbReference type="PANTHER" id="PTHR33445:SF1">
    <property type="entry name" value="ATP SYNTHASE SUBUNIT B"/>
    <property type="match status" value="1"/>
</dbReference>
<dbReference type="PANTHER" id="PTHR33445">
    <property type="entry name" value="ATP SYNTHASE SUBUNIT B', CHLOROPLASTIC"/>
    <property type="match status" value="1"/>
</dbReference>
<dbReference type="Pfam" id="PF00430">
    <property type="entry name" value="ATP-synt_B"/>
    <property type="match status" value="1"/>
</dbReference>
<dbReference type="SUPFAM" id="SSF81573">
    <property type="entry name" value="F1F0 ATP synthase subunit B, membrane domain"/>
    <property type="match status" value="1"/>
</dbReference>
<organism>
    <name type="scientific">Streptococcus suis (strain 05ZYH33)</name>
    <dbReference type="NCBI Taxonomy" id="391295"/>
    <lineage>
        <taxon>Bacteria</taxon>
        <taxon>Bacillati</taxon>
        <taxon>Bacillota</taxon>
        <taxon>Bacilli</taxon>
        <taxon>Lactobacillales</taxon>
        <taxon>Streptococcaceae</taxon>
        <taxon>Streptococcus</taxon>
    </lineage>
</organism>
<keyword id="KW-0066">ATP synthesis</keyword>
<keyword id="KW-1003">Cell membrane</keyword>
<keyword id="KW-0138">CF(0)</keyword>
<keyword id="KW-0375">Hydrogen ion transport</keyword>
<keyword id="KW-0406">Ion transport</keyword>
<keyword id="KW-0472">Membrane</keyword>
<keyword id="KW-0812">Transmembrane</keyword>
<keyword id="KW-1133">Transmembrane helix</keyword>
<keyword id="KW-0813">Transport</keyword>
<sequence length="168" mass="18911">MATTITMQSSTILGNFILVTASFAVLIILIRVFAWDKITGIFEERANKIANDIDAAEEKLTAAANLVQQREDELVQGRIESQKIIQDAVERAKLEKKRILEQADVEIQGLKQKAQLEIEAEKREAQENLRVQVAELAVDLASKIILEDLDQQAHSNLIDRYLDKLGDK</sequence>
<evidence type="ECO:0000255" key="1">
    <source>
        <dbReference type="HAMAP-Rule" id="MF_01398"/>
    </source>
</evidence>
<proteinExistence type="inferred from homology"/>
<name>ATPF_STRSY</name>
<gene>
    <name evidence="1" type="primary">atpF</name>
    <name type="ordered locus">SSU05_1176</name>
</gene>
<protein>
    <recommendedName>
        <fullName evidence="1">ATP synthase subunit b</fullName>
    </recommendedName>
    <alternativeName>
        <fullName evidence="1">ATP synthase F(0) sector subunit b</fullName>
    </alternativeName>
    <alternativeName>
        <fullName evidence="1">ATPase subunit I</fullName>
    </alternativeName>
    <alternativeName>
        <fullName evidence="1">F-type ATPase subunit b</fullName>
        <shortName evidence="1">F-ATPase subunit b</shortName>
    </alternativeName>
</protein>
<comment type="function">
    <text evidence="1">F(1)F(0) ATP synthase produces ATP from ADP in the presence of a proton or sodium gradient. F-type ATPases consist of two structural domains, F(1) containing the extramembraneous catalytic core and F(0) containing the membrane proton channel, linked together by a central stalk and a peripheral stalk. During catalysis, ATP synthesis in the catalytic domain of F(1) is coupled via a rotary mechanism of the central stalk subunits to proton translocation.</text>
</comment>
<comment type="function">
    <text evidence="1">Component of the F(0) channel, it forms part of the peripheral stalk, linking F(1) to F(0).</text>
</comment>
<comment type="subunit">
    <text evidence="1">F-type ATPases have 2 components, F(1) - the catalytic core - and F(0) - the membrane proton channel. F(1) has five subunits: alpha(3), beta(3), gamma(1), delta(1), epsilon(1). F(0) has three main subunits: a(1), b(2) and c(10-14). The alpha and beta chains form an alternating ring which encloses part of the gamma chain. F(1) is attached to F(0) by a central stalk formed by the gamma and epsilon chains, while a peripheral stalk is formed by the delta and b chains.</text>
</comment>
<comment type="subcellular location">
    <subcellularLocation>
        <location evidence="1">Cell membrane</location>
        <topology evidence="1">Single-pass membrane protein</topology>
    </subcellularLocation>
</comment>
<comment type="similarity">
    <text evidence="1">Belongs to the ATPase B chain family.</text>
</comment>